<accession>Q92GR9</accession>
<proteinExistence type="inferred from homology"/>
<comment type="function">
    <text evidence="1">Catalyzes the attachment of valine to tRNA(Val). As ValRS can inadvertently accommodate and process structurally similar amino acids such as threonine, to avoid such errors, it has a 'posttransfer' editing activity that hydrolyzes mischarged Thr-tRNA(Val) in a tRNA-dependent manner.</text>
</comment>
<comment type="catalytic activity">
    <reaction evidence="1">
        <text>tRNA(Val) + L-valine + ATP = L-valyl-tRNA(Val) + AMP + diphosphate</text>
        <dbReference type="Rhea" id="RHEA:10704"/>
        <dbReference type="Rhea" id="RHEA-COMP:9672"/>
        <dbReference type="Rhea" id="RHEA-COMP:9708"/>
        <dbReference type="ChEBI" id="CHEBI:30616"/>
        <dbReference type="ChEBI" id="CHEBI:33019"/>
        <dbReference type="ChEBI" id="CHEBI:57762"/>
        <dbReference type="ChEBI" id="CHEBI:78442"/>
        <dbReference type="ChEBI" id="CHEBI:78537"/>
        <dbReference type="ChEBI" id="CHEBI:456215"/>
        <dbReference type="EC" id="6.1.1.9"/>
    </reaction>
</comment>
<comment type="subunit">
    <text evidence="1">Monomer.</text>
</comment>
<comment type="subcellular location">
    <subcellularLocation>
        <location evidence="1">Cytoplasm</location>
    </subcellularLocation>
</comment>
<comment type="domain">
    <text evidence="1">ValRS has two distinct active sites: one for aminoacylation and one for editing. The misactivated threonine is translocated from the active site to the editing site.</text>
</comment>
<comment type="similarity">
    <text evidence="1">Belongs to the class-I aminoacyl-tRNA synthetase family. ValS type 2 subfamily.</text>
</comment>
<feature type="chain" id="PRO_0000224613" description="Valine--tRNA ligase">
    <location>
        <begin position="1"/>
        <end position="812"/>
    </location>
</feature>
<feature type="short sequence motif" description="'HIGH' region">
    <location>
        <begin position="46"/>
        <end position="56"/>
    </location>
</feature>
<feature type="short sequence motif" description="'KMSKS' region">
    <location>
        <begin position="536"/>
        <end position="540"/>
    </location>
</feature>
<feature type="binding site" evidence="1">
    <location>
        <position position="539"/>
    </location>
    <ligand>
        <name>ATP</name>
        <dbReference type="ChEBI" id="CHEBI:30616"/>
    </ligand>
</feature>
<organism>
    <name type="scientific">Rickettsia conorii (strain ATCC VR-613 / Malish 7)</name>
    <dbReference type="NCBI Taxonomy" id="272944"/>
    <lineage>
        <taxon>Bacteria</taxon>
        <taxon>Pseudomonadati</taxon>
        <taxon>Pseudomonadota</taxon>
        <taxon>Alphaproteobacteria</taxon>
        <taxon>Rickettsiales</taxon>
        <taxon>Rickettsiaceae</taxon>
        <taxon>Rickettsieae</taxon>
        <taxon>Rickettsia</taxon>
        <taxon>spotted fever group</taxon>
    </lineage>
</organism>
<sequence>MKEFPKNYNFTENEKKWQQIWQEKQIYAYNPNAAKEETYVIDTPPPTVSGQLHIGHVYSYTQTDFIVRFQRMMGKNIFYPMGFDDNGLPTERLVEKQKQIKAYNMDRSEFIKICEEVVESEEEKFRSLFNQIALSVDWSLEYQTISPLSRKISQMSFLDLVQKEEIYRTNQPILWDPVDGTALAQADIEDKEKTSFMNYITFKTEQGDPLTIATTRPELLPACVAVFYHPDDGRYKHLAGKSAITPLFNEQVPLLTDPLVRQDKGTGLVMCCTFGDQTDITWWKTHNLPLKTIITKKGTIDFQHETSIDGLKIKEARTKIIDILKEQELLIKQEDITHTVKCAERSGAPLEILTVPQWFVKTISHKEELLKRANELNWHPKHMKIRLENWINAISWDWCISRQRYFGVPFPVWYSKRVGEEGKILYADVTQLPIDPLKDLPMGYSKEEVEPDYDVMDTWATSSVSPQLSTHGISDDFAVNKDRHDKLFPMDLRPQAHEIIRTWAFYTILKAHLHQNTLPWKNIMVSGWCLAEDRSKMSKSKGNVLVPEKLLEQYGSDVIRYWSANSKLGADTAYSEDVMKNGKRLVNKLWNAAKFVFIHFDKLKGEDKKASLLDIKEKITNEFDKWMVNKLVELVKLATNELQNYEYANAMHLTEKFFWVVLCDNYLEISKTRSYDEEHKNPQGQYSSILTLYHVMQTLLKLFAPFMPHITEELYQILYSENSIHVKGSWVNYSDLNYEINAKGAEGLLEILDIVRKFKAEKNLSIKTPIKLLEVSGIVLSAELTEDLKNVTSAEEIQFEMKDDKIKVNIIL</sequence>
<evidence type="ECO:0000255" key="1">
    <source>
        <dbReference type="HAMAP-Rule" id="MF_02005"/>
    </source>
</evidence>
<name>SYV_RICCN</name>
<keyword id="KW-0030">Aminoacyl-tRNA synthetase</keyword>
<keyword id="KW-0067">ATP-binding</keyword>
<keyword id="KW-0963">Cytoplasm</keyword>
<keyword id="KW-0436">Ligase</keyword>
<keyword id="KW-0547">Nucleotide-binding</keyword>
<keyword id="KW-0648">Protein biosynthesis</keyword>
<dbReference type="EC" id="6.1.1.9" evidence="1"/>
<dbReference type="EMBL" id="AE006914">
    <property type="protein sequence ID" value="AAL03591.1"/>
    <property type="molecule type" value="Genomic_DNA"/>
</dbReference>
<dbReference type="PIR" id="E97831">
    <property type="entry name" value="E97831"/>
</dbReference>
<dbReference type="RefSeq" id="WP_010977631.1">
    <property type="nucleotide sequence ID" value="NC_003103.1"/>
</dbReference>
<dbReference type="SMR" id="Q92GR9"/>
<dbReference type="GeneID" id="928202"/>
<dbReference type="KEGG" id="rco:RC1053"/>
<dbReference type="PATRIC" id="fig|272944.4.peg.1205"/>
<dbReference type="HOGENOM" id="CLU_001493_0_2_5"/>
<dbReference type="Proteomes" id="UP000000816">
    <property type="component" value="Chromosome"/>
</dbReference>
<dbReference type="GO" id="GO:0005829">
    <property type="term" value="C:cytosol"/>
    <property type="evidence" value="ECO:0007669"/>
    <property type="project" value="TreeGrafter"/>
</dbReference>
<dbReference type="GO" id="GO:0002161">
    <property type="term" value="F:aminoacyl-tRNA deacylase activity"/>
    <property type="evidence" value="ECO:0007669"/>
    <property type="project" value="InterPro"/>
</dbReference>
<dbReference type="GO" id="GO:0005524">
    <property type="term" value="F:ATP binding"/>
    <property type="evidence" value="ECO:0007669"/>
    <property type="project" value="UniProtKB-UniRule"/>
</dbReference>
<dbReference type="GO" id="GO:0004832">
    <property type="term" value="F:valine-tRNA ligase activity"/>
    <property type="evidence" value="ECO:0007669"/>
    <property type="project" value="UniProtKB-UniRule"/>
</dbReference>
<dbReference type="GO" id="GO:0006438">
    <property type="term" value="P:valyl-tRNA aminoacylation"/>
    <property type="evidence" value="ECO:0007669"/>
    <property type="project" value="UniProtKB-UniRule"/>
</dbReference>
<dbReference type="CDD" id="cd07962">
    <property type="entry name" value="Anticodon_Ia_Val"/>
    <property type="match status" value="1"/>
</dbReference>
<dbReference type="FunFam" id="1.10.730.10:FF:000033">
    <property type="entry name" value="Valine--tRNA ligase"/>
    <property type="match status" value="1"/>
</dbReference>
<dbReference type="FunFam" id="3.40.50.620:FF:000380">
    <property type="entry name" value="Valine--tRNA ligase"/>
    <property type="match status" value="1"/>
</dbReference>
<dbReference type="Gene3D" id="3.40.50.620">
    <property type="entry name" value="HUPs"/>
    <property type="match status" value="2"/>
</dbReference>
<dbReference type="Gene3D" id="1.10.730.10">
    <property type="entry name" value="Isoleucyl-tRNA Synthetase, Domain 1"/>
    <property type="match status" value="1"/>
</dbReference>
<dbReference type="HAMAP" id="MF_02005">
    <property type="entry name" value="Val_tRNA_synth_type2"/>
    <property type="match status" value="1"/>
</dbReference>
<dbReference type="InterPro" id="IPR001412">
    <property type="entry name" value="aa-tRNA-synth_I_CS"/>
</dbReference>
<dbReference type="InterPro" id="IPR002300">
    <property type="entry name" value="aa-tRNA-synth_Ia"/>
</dbReference>
<dbReference type="InterPro" id="IPR033705">
    <property type="entry name" value="Anticodon_Ia_Val"/>
</dbReference>
<dbReference type="InterPro" id="IPR013155">
    <property type="entry name" value="M/V/L/I-tRNA-synth_anticd-bd"/>
</dbReference>
<dbReference type="InterPro" id="IPR014729">
    <property type="entry name" value="Rossmann-like_a/b/a_fold"/>
</dbReference>
<dbReference type="InterPro" id="IPR009080">
    <property type="entry name" value="tRNAsynth_Ia_anticodon-bd"/>
</dbReference>
<dbReference type="InterPro" id="IPR009008">
    <property type="entry name" value="Val/Leu/Ile-tRNA-synth_edit"/>
</dbReference>
<dbReference type="InterPro" id="IPR022874">
    <property type="entry name" value="Valine-tRNA_ligase_type_2"/>
</dbReference>
<dbReference type="InterPro" id="IPR002303">
    <property type="entry name" value="Valyl-tRNA_ligase"/>
</dbReference>
<dbReference type="NCBIfam" id="NF009687">
    <property type="entry name" value="PRK13208.1"/>
    <property type="match status" value="1"/>
</dbReference>
<dbReference type="NCBIfam" id="TIGR00422">
    <property type="entry name" value="valS"/>
    <property type="match status" value="1"/>
</dbReference>
<dbReference type="PANTHER" id="PTHR11946:SF93">
    <property type="entry name" value="VALINE--TRNA LIGASE, CHLOROPLASTIC_MITOCHONDRIAL 2"/>
    <property type="match status" value="1"/>
</dbReference>
<dbReference type="PANTHER" id="PTHR11946">
    <property type="entry name" value="VALYL-TRNA SYNTHETASES"/>
    <property type="match status" value="1"/>
</dbReference>
<dbReference type="Pfam" id="PF08264">
    <property type="entry name" value="Anticodon_1"/>
    <property type="match status" value="1"/>
</dbReference>
<dbReference type="Pfam" id="PF00133">
    <property type="entry name" value="tRNA-synt_1"/>
    <property type="match status" value="1"/>
</dbReference>
<dbReference type="PRINTS" id="PR00986">
    <property type="entry name" value="TRNASYNTHVAL"/>
</dbReference>
<dbReference type="SUPFAM" id="SSF47323">
    <property type="entry name" value="Anticodon-binding domain of a subclass of class I aminoacyl-tRNA synthetases"/>
    <property type="match status" value="1"/>
</dbReference>
<dbReference type="SUPFAM" id="SSF52374">
    <property type="entry name" value="Nucleotidylyl transferase"/>
    <property type="match status" value="1"/>
</dbReference>
<dbReference type="SUPFAM" id="SSF50677">
    <property type="entry name" value="ValRS/IleRS/LeuRS editing domain"/>
    <property type="match status" value="1"/>
</dbReference>
<dbReference type="PROSITE" id="PS00178">
    <property type="entry name" value="AA_TRNA_LIGASE_I"/>
    <property type="match status" value="1"/>
</dbReference>
<protein>
    <recommendedName>
        <fullName evidence="1">Valine--tRNA ligase</fullName>
        <ecNumber evidence="1">6.1.1.9</ecNumber>
    </recommendedName>
    <alternativeName>
        <fullName evidence="1">Valyl-tRNA synthetase</fullName>
        <shortName evidence="1">ValRS</shortName>
    </alternativeName>
</protein>
<gene>
    <name evidence="1" type="primary">valS</name>
    <name type="ordered locus">RC1053</name>
</gene>
<reference key="1">
    <citation type="journal article" date="2001" name="Science">
        <title>Mechanisms of evolution in Rickettsia conorii and R. prowazekii.</title>
        <authorList>
            <person name="Ogata H."/>
            <person name="Audic S."/>
            <person name="Renesto-Audiffren P."/>
            <person name="Fournier P.-E."/>
            <person name="Barbe V."/>
            <person name="Samson D."/>
            <person name="Roux V."/>
            <person name="Cossart P."/>
            <person name="Weissenbach J."/>
            <person name="Claverie J.-M."/>
            <person name="Raoult D."/>
        </authorList>
    </citation>
    <scope>NUCLEOTIDE SEQUENCE [LARGE SCALE GENOMIC DNA]</scope>
    <source>
        <strain>ATCC VR-613 / Malish 7</strain>
    </source>
</reference>